<dbReference type="EMBL" id="AL009126">
    <property type="protein sequence ID" value="CAE01448.1"/>
    <property type="molecule type" value="Genomic_DNA"/>
</dbReference>
<dbReference type="RefSeq" id="WP_003243181.1">
    <property type="nucleotide sequence ID" value="NZ_OZ025638.1"/>
</dbReference>
<dbReference type="RefSeq" id="YP_054572.1">
    <property type="nucleotide sequence ID" value="NC_000964.3"/>
</dbReference>
<dbReference type="SMR" id="Q7WY76"/>
<dbReference type="FunCoup" id="Q7WY76">
    <property type="interactions" value="31"/>
</dbReference>
<dbReference type="STRING" id="224308.BSU06860"/>
<dbReference type="PaxDb" id="224308-BSU06860"/>
<dbReference type="DNASU" id="2914263"/>
<dbReference type="EnsemblBacteria" id="CAE01448">
    <property type="protein sequence ID" value="CAE01448"/>
    <property type="gene ID" value="BSU_06860"/>
</dbReference>
<dbReference type="GeneID" id="2914263"/>
<dbReference type="KEGG" id="bsu:BSU06860"/>
<dbReference type="PATRIC" id="fig|224308.179.peg.746"/>
<dbReference type="eggNOG" id="COG1309">
    <property type="taxonomic scope" value="Bacteria"/>
</dbReference>
<dbReference type="InParanoid" id="Q7WY76"/>
<dbReference type="OrthoDB" id="9795242at2"/>
<dbReference type="PhylomeDB" id="Q7WY76"/>
<dbReference type="BioCyc" id="BSUB:BSU06860-MONOMER"/>
<dbReference type="Proteomes" id="UP000001570">
    <property type="component" value="Chromosome"/>
</dbReference>
<dbReference type="GO" id="GO:0003700">
    <property type="term" value="F:DNA-binding transcription factor activity"/>
    <property type="evidence" value="ECO:0000318"/>
    <property type="project" value="GO_Central"/>
</dbReference>
<dbReference type="GO" id="GO:0000976">
    <property type="term" value="F:transcription cis-regulatory region binding"/>
    <property type="evidence" value="ECO:0000318"/>
    <property type="project" value="GO_Central"/>
</dbReference>
<dbReference type="GO" id="GO:0006355">
    <property type="term" value="P:regulation of DNA-templated transcription"/>
    <property type="evidence" value="ECO:0000318"/>
    <property type="project" value="GO_Central"/>
</dbReference>
<dbReference type="Gene3D" id="1.10.10.60">
    <property type="entry name" value="Homeodomain-like"/>
    <property type="match status" value="1"/>
</dbReference>
<dbReference type="Gene3D" id="1.10.357.10">
    <property type="entry name" value="Tetracycline Repressor, domain 2"/>
    <property type="match status" value="1"/>
</dbReference>
<dbReference type="InterPro" id="IPR009057">
    <property type="entry name" value="Homeodomain-like_sf"/>
</dbReference>
<dbReference type="InterPro" id="IPR001647">
    <property type="entry name" value="HTH_TetR"/>
</dbReference>
<dbReference type="InterPro" id="IPR036271">
    <property type="entry name" value="Tet_transcr_reg_TetR-rel_C_sf"/>
</dbReference>
<dbReference type="PANTHER" id="PTHR47506:SF1">
    <property type="entry name" value="HTH-TYPE TRANSCRIPTIONAL REGULATOR YJDC"/>
    <property type="match status" value="1"/>
</dbReference>
<dbReference type="PANTHER" id="PTHR47506">
    <property type="entry name" value="TRANSCRIPTIONAL REGULATORY PROTEIN"/>
    <property type="match status" value="1"/>
</dbReference>
<dbReference type="Pfam" id="PF00440">
    <property type="entry name" value="TetR_N"/>
    <property type="match status" value="1"/>
</dbReference>
<dbReference type="SUPFAM" id="SSF46689">
    <property type="entry name" value="Homeodomain-like"/>
    <property type="match status" value="1"/>
</dbReference>
<dbReference type="SUPFAM" id="SSF48498">
    <property type="entry name" value="Tetracyclin repressor-like, C-terminal domain"/>
    <property type="match status" value="1"/>
</dbReference>
<dbReference type="PROSITE" id="PS50977">
    <property type="entry name" value="HTH_TETR_2"/>
    <property type="match status" value="1"/>
</dbReference>
<accession>Q7WY76</accession>
<evidence type="ECO:0000255" key="1">
    <source>
        <dbReference type="PROSITE-ProRule" id="PRU00335"/>
    </source>
</evidence>
<protein>
    <recommendedName>
        <fullName>Uncharacterized HTH-type transcriptional regulator YezE</fullName>
    </recommendedName>
</protein>
<organism>
    <name type="scientific">Bacillus subtilis (strain 168)</name>
    <dbReference type="NCBI Taxonomy" id="224308"/>
    <lineage>
        <taxon>Bacteria</taxon>
        <taxon>Bacillati</taxon>
        <taxon>Bacillota</taxon>
        <taxon>Bacilli</taxon>
        <taxon>Bacillales</taxon>
        <taxon>Bacillaceae</taxon>
        <taxon>Bacillus</taxon>
    </lineage>
</organism>
<proteinExistence type="predicted"/>
<gene>
    <name type="primary">yezE</name>
    <name type="ordered locus">BSU06860</name>
</gene>
<feature type="chain" id="PRO_0000070650" description="Uncharacterized HTH-type transcriptional regulator YezE">
    <location>
        <begin position="1"/>
        <end position="194"/>
    </location>
</feature>
<feature type="domain" description="HTH tetR-type" evidence="1">
    <location>
        <begin position="6"/>
        <end position="66"/>
    </location>
</feature>
<feature type="DNA-binding region" description="H-T-H motif" evidence="1">
    <location>
        <begin position="29"/>
        <end position="48"/>
    </location>
</feature>
<sequence length="194" mass="21887">MGRNKEFDTALVLHRAIEVFGEYGYEGTSLQDLLSHLGIARQSLYDTYGTKRDLFLSAVKSYLEGKNAAVMERLEAPGSVKEAIRDIFQEGVNALRDPERAKACYIINSAIEQIPHDPELARYFERQSKQLEDAFYHGLLRAKDQGELNGEDTDISALARYLNQSRLSLTFIAKVTADMDRLQDHVDVSLSVLD</sequence>
<reference key="1">
    <citation type="journal article" date="1997" name="Nature">
        <title>The complete genome sequence of the Gram-positive bacterium Bacillus subtilis.</title>
        <authorList>
            <person name="Kunst F."/>
            <person name="Ogasawara N."/>
            <person name="Moszer I."/>
            <person name="Albertini A.M."/>
            <person name="Alloni G."/>
            <person name="Azevedo V."/>
            <person name="Bertero M.G."/>
            <person name="Bessieres P."/>
            <person name="Bolotin A."/>
            <person name="Borchert S."/>
            <person name="Borriss R."/>
            <person name="Boursier L."/>
            <person name="Brans A."/>
            <person name="Braun M."/>
            <person name="Brignell S.C."/>
            <person name="Bron S."/>
            <person name="Brouillet S."/>
            <person name="Bruschi C.V."/>
            <person name="Caldwell B."/>
            <person name="Capuano V."/>
            <person name="Carter N.M."/>
            <person name="Choi S.-K."/>
            <person name="Codani J.-J."/>
            <person name="Connerton I.F."/>
            <person name="Cummings N.J."/>
            <person name="Daniel R.A."/>
            <person name="Denizot F."/>
            <person name="Devine K.M."/>
            <person name="Duesterhoeft A."/>
            <person name="Ehrlich S.D."/>
            <person name="Emmerson P.T."/>
            <person name="Entian K.-D."/>
            <person name="Errington J."/>
            <person name="Fabret C."/>
            <person name="Ferrari E."/>
            <person name="Foulger D."/>
            <person name="Fritz C."/>
            <person name="Fujita M."/>
            <person name="Fujita Y."/>
            <person name="Fuma S."/>
            <person name="Galizzi A."/>
            <person name="Galleron N."/>
            <person name="Ghim S.-Y."/>
            <person name="Glaser P."/>
            <person name="Goffeau A."/>
            <person name="Golightly E.J."/>
            <person name="Grandi G."/>
            <person name="Guiseppi G."/>
            <person name="Guy B.J."/>
            <person name="Haga K."/>
            <person name="Haiech J."/>
            <person name="Harwood C.R."/>
            <person name="Henaut A."/>
            <person name="Hilbert H."/>
            <person name="Holsappel S."/>
            <person name="Hosono S."/>
            <person name="Hullo M.-F."/>
            <person name="Itaya M."/>
            <person name="Jones L.-M."/>
            <person name="Joris B."/>
            <person name="Karamata D."/>
            <person name="Kasahara Y."/>
            <person name="Klaerr-Blanchard M."/>
            <person name="Klein C."/>
            <person name="Kobayashi Y."/>
            <person name="Koetter P."/>
            <person name="Koningstein G."/>
            <person name="Krogh S."/>
            <person name="Kumano M."/>
            <person name="Kurita K."/>
            <person name="Lapidus A."/>
            <person name="Lardinois S."/>
            <person name="Lauber J."/>
            <person name="Lazarevic V."/>
            <person name="Lee S.-M."/>
            <person name="Levine A."/>
            <person name="Liu H."/>
            <person name="Masuda S."/>
            <person name="Mauel C."/>
            <person name="Medigue C."/>
            <person name="Medina N."/>
            <person name="Mellado R.P."/>
            <person name="Mizuno M."/>
            <person name="Moestl D."/>
            <person name="Nakai S."/>
            <person name="Noback M."/>
            <person name="Noone D."/>
            <person name="O'Reilly M."/>
            <person name="Ogawa K."/>
            <person name="Ogiwara A."/>
            <person name="Oudega B."/>
            <person name="Park S.-H."/>
            <person name="Parro V."/>
            <person name="Pohl T.M."/>
            <person name="Portetelle D."/>
            <person name="Porwollik S."/>
            <person name="Prescott A.M."/>
            <person name="Presecan E."/>
            <person name="Pujic P."/>
            <person name="Purnelle B."/>
            <person name="Rapoport G."/>
            <person name="Rey M."/>
            <person name="Reynolds S."/>
            <person name="Rieger M."/>
            <person name="Rivolta C."/>
            <person name="Rocha E."/>
            <person name="Roche B."/>
            <person name="Rose M."/>
            <person name="Sadaie Y."/>
            <person name="Sato T."/>
            <person name="Scanlan E."/>
            <person name="Schleich S."/>
            <person name="Schroeter R."/>
            <person name="Scoffone F."/>
            <person name="Sekiguchi J."/>
            <person name="Sekowska A."/>
            <person name="Seror S.J."/>
            <person name="Serror P."/>
            <person name="Shin B.-S."/>
            <person name="Soldo B."/>
            <person name="Sorokin A."/>
            <person name="Tacconi E."/>
            <person name="Takagi T."/>
            <person name="Takahashi H."/>
            <person name="Takemaru K."/>
            <person name="Takeuchi M."/>
            <person name="Tamakoshi A."/>
            <person name="Tanaka T."/>
            <person name="Terpstra P."/>
            <person name="Tognoni A."/>
            <person name="Tosato V."/>
            <person name="Uchiyama S."/>
            <person name="Vandenbol M."/>
            <person name="Vannier F."/>
            <person name="Vassarotti A."/>
            <person name="Viari A."/>
            <person name="Wambutt R."/>
            <person name="Wedler E."/>
            <person name="Wedler H."/>
            <person name="Weitzenegger T."/>
            <person name="Winters P."/>
            <person name="Wipat A."/>
            <person name="Yamamoto H."/>
            <person name="Yamane K."/>
            <person name="Yasumoto K."/>
            <person name="Yata K."/>
            <person name="Yoshida K."/>
            <person name="Yoshikawa H.-F."/>
            <person name="Zumstein E."/>
            <person name="Yoshikawa H."/>
            <person name="Danchin A."/>
        </authorList>
    </citation>
    <scope>NUCLEOTIDE SEQUENCE [LARGE SCALE GENOMIC DNA]</scope>
    <source>
        <strain>168</strain>
    </source>
</reference>
<reference key="2">
    <citation type="journal article" date="2005" name="Microbiol. Mol. Biol. Rev.">
        <title>The TetR family of transcriptional repressors.</title>
        <authorList>
            <person name="Ramos J.L."/>
            <person name="Martinez-Bueno M."/>
            <person name="Molina-Henares A.J."/>
            <person name="Teran W."/>
            <person name="Watanabe K."/>
            <person name="Zhang X."/>
            <person name="Gallegos M.T."/>
            <person name="Brennan R."/>
            <person name="Tobes R."/>
        </authorList>
    </citation>
    <scope>REVIEW</scope>
    <scope>GENE FAMILY</scope>
</reference>
<keyword id="KW-0238">DNA-binding</keyword>
<keyword id="KW-1185">Reference proteome</keyword>
<keyword id="KW-0678">Repressor</keyword>
<keyword id="KW-0804">Transcription</keyword>
<keyword id="KW-0805">Transcription regulation</keyword>
<name>YEZE_BACSU</name>